<proteinExistence type="inferred from homology"/>
<comment type="function">
    <text evidence="1">Catalyzes the hydrolysis of N-succinyl-L,L-diaminopimelic acid (SDAP), forming succinate and LL-2,6-diaminopimelate (DAP), an intermediate involved in the bacterial biosynthesis of lysine and meso-diaminopimelic acid, an essential component of bacterial cell walls.</text>
</comment>
<comment type="catalytic activity">
    <reaction evidence="1">
        <text>N-succinyl-(2S,6S)-2,6-diaminopimelate + H2O = (2S,6S)-2,6-diaminopimelate + succinate</text>
        <dbReference type="Rhea" id="RHEA:22608"/>
        <dbReference type="ChEBI" id="CHEBI:15377"/>
        <dbReference type="ChEBI" id="CHEBI:30031"/>
        <dbReference type="ChEBI" id="CHEBI:57609"/>
        <dbReference type="ChEBI" id="CHEBI:58087"/>
        <dbReference type="EC" id="3.5.1.18"/>
    </reaction>
</comment>
<comment type="cofactor">
    <cofactor evidence="1">
        <name>Zn(2+)</name>
        <dbReference type="ChEBI" id="CHEBI:29105"/>
    </cofactor>
    <cofactor evidence="1">
        <name>Co(2+)</name>
        <dbReference type="ChEBI" id="CHEBI:48828"/>
    </cofactor>
    <text evidence="1">Binds 2 Zn(2+) or Co(2+) ions per subunit.</text>
</comment>
<comment type="pathway">
    <text evidence="1">Amino-acid biosynthesis; L-lysine biosynthesis via DAP pathway; LL-2,6-diaminopimelate from (S)-tetrahydrodipicolinate (succinylase route): step 3/3.</text>
</comment>
<comment type="subunit">
    <text evidence="1">Homodimer.</text>
</comment>
<comment type="similarity">
    <text evidence="1">Belongs to the peptidase M20A family. DapE subfamily.</text>
</comment>
<protein>
    <recommendedName>
        <fullName evidence="1">Succinyl-diaminopimelate desuccinylase</fullName>
        <shortName evidence="1">SDAP desuccinylase</shortName>
        <ecNumber evidence="1">3.5.1.18</ecNumber>
    </recommendedName>
    <alternativeName>
        <fullName evidence="1">N-succinyl-LL-2,6-diaminoheptanedioate amidohydrolase</fullName>
    </alternativeName>
</protein>
<feature type="chain" id="PRO_0000375655" description="Succinyl-diaminopimelate desuccinylase">
    <location>
        <begin position="1"/>
        <end position="383"/>
    </location>
</feature>
<feature type="active site" evidence="1">
    <location>
        <position position="75"/>
    </location>
</feature>
<feature type="active site" description="Proton acceptor" evidence="1">
    <location>
        <position position="141"/>
    </location>
</feature>
<feature type="binding site" evidence="1">
    <location>
        <position position="73"/>
    </location>
    <ligand>
        <name>Zn(2+)</name>
        <dbReference type="ChEBI" id="CHEBI:29105"/>
        <label>1</label>
    </ligand>
</feature>
<feature type="binding site" evidence="1">
    <location>
        <position position="107"/>
    </location>
    <ligand>
        <name>Zn(2+)</name>
        <dbReference type="ChEBI" id="CHEBI:29105"/>
        <label>1</label>
    </ligand>
</feature>
<feature type="binding site" evidence="1">
    <location>
        <position position="107"/>
    </location>
    <ligand>
        <name>Zn(2+)</name>
        <dbReference type="ChEBI" id="CHEBI:29105"/>
        <label>2</label>
    </ligand>
</feature>
<feature type="binding site" evidence="1">
    <location>
        <position position="142"/>
    </location>
    <ligand>
        <name>Zn(2+)</name>
        <dbReference type="ChEBI" id="CHEBI:29105"/>
        <label>2</label>
    </ligand>
</feature>
<feature type="binding site" evidence="1">
    <location>
        <position position="170"/>
    </location>
    <ligand>
        <name>Zn(2+)</name>
        <dbReference type="ChEBI" id="CHEBI:29105"/>
        <label>1</label>
    </ligand>
</feature>
<feature type="binding site" evidence="1">
    <location>
        <position position="356"/>
    </location>
    <ligand>
        <name>Zn(2+)</name>
        <dbReference type="ChEBI" id="CHEBI:29105"/>
        <label>2</label>
    </ligand>
</feature>
<gene>
    <name evidence="1" type="primary">dapE</name>
    <name type="ordered locus">PSPA7_4217</name>
</gene>
<name>DAPE_PSEP7</name>
<evidence type="ECO:0000255" key="1">
    <source>
        <dbReference type="HAMAP-Rule" id="MF_01690"/>
    </source>
</evidence>
<sequence>MTASSPSLSPTLELACELIRRPSVTPVDADCQALMMRRLEAAGFALEPMRIEEVDNFWARRGGDGPVLCFAGHTDVVPTGPVQAWQHQPFDALIDEQGMLCGRGAADMKGSLASMIVAVERFVADHPGHKGAIAFLITSDEEGPAHHGTKAVVERLAARGERLDWCIVGEPSSTSLVGDVVKNGRRGSLGARLTIRGVQGHVAYPHLAKNPIHLAAPALAELAAEHWDDGNAFFPPTSFQISNLNSGTGATNVIPGELSALFNFRFSTESTVEGLQKRVEAILDKHGLDWHVEWALSGLPFLTEPGELLDAVAASIKAVTGRETRPSTSGGTSDGRFIATMGTQVVELGPVNATIHQVNERVLASDLELLTEIYYQTLVRLLA</sequence>
<accession>A6V936</accession>
<reference key="1">
    <citation type="submission" date="2007-06" db="EMBL/GenBank/DDBJ databases">
        <authorList>
            <person name="Dodson R.J."/>
            <person name="Harkins D."/>
            <person name="Paulsen I.T."/>
        </authorList>
    </citation>
    <scope>NUCLEOTIDE SEQUENCE [LARGE SCALE GENOMIC DNA]</scope>
    <source>
        <strain>DSM 24068 / PA7</strain>
    </source>
</reference>
<dbReference type="EC" id="3.5.1.18" evidence="1"/>
<dbReference type="EMBL" id="CP000744">
    <property type="protein sequence ID" value="ABR80763.1"/>
    <property type="molecule type" value="Genomic_DNA"/>
</dbReference>
<dbReference type="RefSeq" id="WP_012076679.1">
    <property type="nucleotide sequence ID" value="NC_009656.1"/>
</dbReference>
<dbReference type="SMR" id="A6V936"/>
<dbReference type="KEGG" id="pap:PSPA7_4217"/>
<dbReference type="HOGENOM" id="CLU_021802_4_0_6"/>
<dbReference type="UniPathway" id="UPA00034">
    <property type="reaction ID" value="UER00021"/>
</dbReference>
<dbReference type="Proteomes" id="UP000001582">
    <property type="component" value="Chromosome"/>
</dbReference>
<dbReference type="GO" id="GO:0008777">
    <property type="term" value="F:acetylornithine deacetylase activity"/>
    <property type="evidence" value="ECO:0007669"/>
    <property type="project" value="TreeGrafter"/>
</dbReference>
<dbReference type="GO" id="GO:0050897">
    <property type="term" value="F:cobalt ion binding"/>
    <property type="evidence" value="ECO:0007669"/>
    <property type="project" value="UniProtKB-UniRule"/>
</dbReference>
<dbReference type="GO" id="GO:0009014">
    <property type="term" value="F:succinyl-diaminopimelate desuccinylase activity"/>
    <property type="evidence" value="ECO:0007669"/>
    <property type="project" value="UniProtKB-UniRule"/>
</dbReference>
<dbReference type="GO" id="GO:0008270">
    <property type="term" value="F:zinc ion binding"/>
    <property type="evidence" value="ECO:0007669"/>
    <property type="project" value="UniProtKB-UniRule"/>
</dbReference>
<dbReference type="GO" id="GO:0019877">
    <property type="term" value="P:diaminopimelate biosynthetic process"/>
    <property type="evidence" value="ECO:0007669"/>
    <property type="project" value="UniProtKB-UniRule"/>
</dbReference>
<dbReference type="GO" id="GO:0006526">
    <property type="term" value="P:L-arginine biosynthetic process"/>
    <property type="evidence" value="ECO:0007669"/>
    <property type="project" value="TreeGrafter"/>
</dbReference>
<dbReference type="GO" id="GO:0009089">
    <property type="term" value="P:lysine biosynthetic process via diaminopimelate"/>
    <property type="evidence" value="ECO:0007669"/>
    <property type="project" value="UniProtKB-UniRule"/>
</dbReference>
<dbReference type="CDD" id="cd03891">
    <property type="entry name" value="M20_DapE_proteobac"/>
    <property type="match status" value="1"/>
</dbReference>
<dbReference type="FunFam" id="3.30.70.360:FF:000011">
    <property type="entry name" value="Succinyl-diaminopimelate desuccinylase"/>
    <property type="match status" value="1"/>
</dbReference>
<dbReference type="FunFam" id="3.40.630.10:FF:000005">
    <property type="entry name" value="Succinyl-diaminopimelate desuccinylase"/>
    <property type="match status" value="1"/>
</dbReference>
<dbReference type="FunFam" id="3.40.630.10:FF:000010">
    <property type="entry name" value="Succinyl-diaminopimelate desuccinylase"/>
    <property type="match status" value="1"/>
</dbReference>
<dbReference type="Gene3D" id="3.40.630.10">
    <property type="entry name" value="Zn peptidases"/>
    <property type="match status" value="2"/>
</dbReference>
<dbReference type="HAMAP" id="MF_01690">
    <property type="entry name" value="DapE"/>
    <property type="match status" value="1"/>
</dbReference>
<dbReference type="InterPro" id="IPR001261">
    <property type="entry name" value="ArgE/DapE_CS"/>
</dbReference>
<dbReference type="InterPro" id="IPR036264">
    <property type="entry name" value="Bact_exopeptidase_dim_dom"/>
</dbReference>
<dbReference type="InterPro" id="IPR005941">
    <property type="entry name" value="DapE_proteobac"/>
</dbReference>
<dbReference type="InterPro" id="IPR002933">
    <property type="entry name" value="Peptidase_M20"/>
</dbReference>
<dbReference type="InterPro" id="IPR011650">
    <property type="entry name" value="Peptidase_M20_dimer"/>
</dbReference>
<dbReference type="InterPro" id="IPR050072">
    <property type="entry name" value="Peptidase_M20A"/>
</dbReference>
<dbReference type="NCBIfam" id="TIGR01246">
    <property type="entry name" value="dapE_proteo"/>
    <property type="match status" value="1"/>
</dbReference>
<dbReference type="NCBIfam" id="NF009557">
    <property type="entry name" value="PRK13009.1"/>
    <property type="match status" value="1"/>
</dbReference>
<dbReference type="PANTHER" id="PTHR43808">
    <property type="entry name" value="ACETYLORNITHINE DEACETYLASE"/>
    <property type="match status" value="1"/>
</dbReference>
<dbReference type="PANTHER" id="PTHR43808:SF31">
    <property type="entry name" value="N-ACETYL-L-CITRULLINE DEACETYLASE"/>
    <property type="match status" value="1"/>
</dbReference>
<dbReference type="Pfam" id="PF07687">
    <property type="entry name" value="M20_dimer"/>
    <property type="match status" value="1"/>
</dbReference>
<dbReference type="Pfam" id="PF01546">
    <property type="entry name" value="Peptidase_M20"/>
    <property type="match status" value="1"/>
</dbReference>
<dbReference type="SUPFAM" id="SSF55031">
    <property type="entry name" value="Bacterial exopeptidase dimerisation domain"/>
    <property type="match status" value="1"/>
</dbReference>
<dbReference type="SUPFAM" id="SSF53187">
    <property type="entry name" value="Zn-dependent exopeptidases"/>
    <property type="match status" value="1"/>
</dbReference>
<dbReference type="PROSITE" id="PS00759">
    <property type="entry name" value="ARGE_DAPE_CPG2_2"/>
    <property type="match status" value="1"/>
</dbReference>
<keyword id="KW-0028">Amino-acid biosynthesis</keyword>
<keyword id="KW-0170">Cobalt</keyword>
<keyword id="KW-0220">Diaminopimelate biosynthesis</keyword>
<keyword id="KW-0378">Hydrolase</keyword>
<keyword id="KW-0457">Lysine biosynthesis</keyword>
<keyword id="KW-0479">Metal-binding</keyword>
<keyword id="KW-0862">Zinc</keyword>
<organism>
    <name type="scientific">Pseudomonas paraeruginosa (strain DSM 24068 / PA7)</name>
    <name type="common">Pseudomonas aeruginosa (strain PA7)</name>
    <dbReference type="NCBI Taxonomy" id="381754"/>
    <lineage>
        <taxon>Bacteria</taxon>
        <taxon>Pseudomonadati</taxon>
        <taxon>Pseudomonadota</taxon>
        <taxon>Gammaproteobacteria</taxon>
        <taxon>Pseudomonadales</taxon>
        <taxon>Pseudomonadaceae</taxon>
        <taxon>Pseudomonas</taxon>
        <taxon>Pseudomonas paraeruginosa</taxon>
    </lineage>
</organism>